<accession>P38058</accession>
<feature type="signal peptide" evidence="1">
    <location>
        <begin position="1"/>
        <end position="28"/>
    </location>
</feature>
<feature type="chain" id="PRO_0000020846" description="Cellulose-binding protein A">
    <location>
        <begin position="29"/>
        <end position="1848"/>
    </location>
</feature>
<feature type="domain" description="CBM3" evidence="2">
    <location>
        <begin position="29"/>
        <end position="190"/>
    </location>
</feature>
<feature type="domain" description="Cohesin 1">
    <location>
        <begin position="291"/>
        <end position="428"/>
    </location>
</feature>
<feature type="domain" description="Cohesin 2">
    <location>
        <begin position="435"/>
        <end position="570"/>
    </location>
</feature>
<feature type="domain" description="Cohesin 3">
    <location>
        <begin position="668"/>
        <end position="801"/>
    </location>
</feature>
<feature type="domain" description="Cohesin 4">
    <location>
        <begin position="810"/>
        <end position="943"/>
    </location>
</feature>
<feature type="domain" description="Cohesin 5">
    <location>
        <begin position="952"/>
        <end position="1085"/>
    </location>
</feature>
<feature type="domain" description="Cohesin 6">
    <location>
        <begin position="1094"/>
        <end position="1227"/>
    </location>
</feature>
<feature type="domain" description="Cohesin 7">
    <location>
        <begin position="1236"/>
        <end position="1369"/>
    </location>
</feature>
<feature type="domain" description="Cohesin 8">
    <location>
        <begin position="1377"/>
        <end position="1511"/>
    </location>
</feature>
<feature type="domain" description="Cohesin 9">
    <location>
        <begin position="1709"/>
        <end position="1847"/>
    </location>
</feature>
<gene>
    <name type="primary">cbpA</name>
</gene>
<name>CBPA_CLOCL</name>
<proteinExistence type="inferred from homology"/>
<comment type="function">
    <text>Binds to cellulose fibers and coordinates cellulase enzymes.</text>
</comment>
<comment type="subcellular location">
    <subcellularLocation>
        <location>Secreted</location>
    </subcellularLocation>
    <text>Remains at the cell surface.</text>
</comment>
<comment type="PTM">
    <text>The N-terminus is blocked.</text>
</comment>
<comment type="PTM">
    <text evidence="3">Glycosylated.</text>
</comment>
<reference key="1">
    <citation type="journal article" date="1992" name="Proc. Natl. Acad. Sci. U.S.A.">
        <title>Primary sequence analysis of Clostridium cellulovorans cellulose binding protein A.</title>
        <authorList>
            <person name="Shoseyov O."/>
            <person name="Takagi M."/>
            <person name="Goldstein M.A."/>
            <person name="Doi R.H."/>
        </authorList>
    </citation>
    <scope>NUCLEOTIDE SEQUENCE [GENOMIC DNA]</scope>
</reference>
<evidence type="ECO:0000255" key="1"/>
<evidence type="ECO:0000255" key="2">
    <source>
        <dbReference type="PROSITE-ProRule" id="PRU00513"/>
    </source>
</evidence>
<evidence type="ECO:0000305" key="3"/>
<keyword id="KW-0119">Carbohydrate metabolism</keyword>
<keyword id="KW-0961">Cell wall biogenesis/degradation</keyword>
<keyword id="KW-0136">Cellulose degradation</keyword>
<keyword id="KW-0325">Glycoprotein</keyword>
<keyword id="KW-0624">Polysaccharide degradation</keyword>
<keyword id="KW-0677">Repeat</keyword>
<keyword id="KW-0964">Secreted</keyword>
<keyword id="KW-0732">Signal</keyword>
<organism>
    <name type="scientific">Clostridium cellulovorans</name>
    <dbReference type="NCBI Taxonomy" id="1493"/>
    <lineage>
        <taxon>Bacteria</taxon>
        <taxon>Bacillati</taxon>
        <taxon>Bacillota</taxon>
        <taxon>Clostridia</taxon>
        <taxon>Eubacteriales</taxon>
        <taxon>Clostridiaceae</taxon>
        <taxon>Clostridium</taxon>
    </lineage>
</organism>
<dbReference type="EMBL" id="M73817">
    <property type="protein sequence ID" value="AAA23218.1"/>
    <property type="molecule type" value="Genomic_DNA"/>
</dbReference>
<dbReference type="PIR" id="A44140">
    <property type="entry name" value="A44140"/>
</dbReference>
<dbReference type="SMR" id="P38058"/>
<dbReference type="CAZy" id="CBM3">
    <property type="family name" value="Carbohydrate-Binding Module Family 3"/>
</dbReference>
<dbReference type="GO" id="GO:0005576">
    <property type="term" value="C:extracellular region"/>
    <property type="evidence" value="ECO:0007669"/>
    <property type="project" value="UniProtKB-SubCell"/>
</dbReference>
<dbReference type="GO" id="GO:0030248">
    <property type="term" value="F:cellulose binding"/>
    <property type="evidence" value="ECO:0007669"/>
    <property type="project" value="InterPro"/>
</dbReference>
<dbReference type="GO" id="GO:0071555">
    <property type="term" value="P:cell wall organization"/>
    <property type="evidence" value="ECO:0007669"/>
    <property type="project" value="UniProtKB-KW"/>
</dbReference>
<dbReference type="GO" id="GO:0030245">
    <property type="term" value="P:cellulose catabolic process"/>
    <property type="evidence" value="ECO:0007669"/>
    <property type="project" value="UniProtKB-KW"/>
</dbReference>
<dbReference type="CDD" id="cd08548">
    <property type="entry name" value="Type_I_cohesin_like"/>
    <property type="match status" value="9"/>
</dbReference>
<dbReference type="Gene3D" id="2.60.40.680">
    <property type="match status" value="9"/>
</dbReference>
<dbReference type="Gene3D" id="2.60.40.710">
    <property type="entry name" value="Endoglucanase-like"/>
    <property type="match status" value="1"/>
</dbReference>
<dbReference type="Gene3D" id="2.60.40.10">
    <property type="entry name" value="Immunoglobulins"/>
    <property type="match status" value="4"/>
</dbReference>
<dbReference type="InterPro" id="IPR005102">
    <property type="entry name" value="Carbo-bd_X2"/>
</dbReference>
<dbReference type="InterPro" id="IPR008965">
    <property type="entry name" value="CBM2/CBM3_carb-bd_dom_sf"/>
</dbReference>
<dbReference type="InterPro" id="IPR001956">
    <property type="entry name" value="CBM3"/>
</dbReference>
<dbReference type="InterPro" id="IPR036966">
    <property type="entry name" value="CBM3_sf"/>
</dbReference>
<dbReference type="InterPro" id="IPR002102">
    <property type="entry name" value="Cohesin_dom"/>
</dbReference>
<dbReference type="InterPro" id="IPR013783">
    <property type="entry name" value="Ig-like_fold"/>
</dbReference>
<dbReference type="InterPro" id="IPR014756">
    <property type="entry name" value="Ig_E-set"/>
</dbReference>
<dbReference type="Pfam" id="PF00942">
    <property type="entry name" value="CBM_3"/>
    <property type="match status" value="1"/>
</dbReference>
<dbReference type="Pfam" id="PF03442">
    <property type="entry name" value="CBM_X2"/>
    <property type="match status" value="4"/>
</dbReference>
<dbReference type="Pfam" id="PF00963">
    <property type="entry name" value="Cohesin"/>
    <property type="match status" value="9"/>
</dbReference>
<dbReference type="SMART" id="SM01067">
    <property type="entry name" value="CBM_3"/>
    <property type="match status" value="1"/>
</dbReference>
<dbReference type="SUPFAM" id="SSF49384">
    <property type="entry name" value="Carbohydrate-binding domain"/>
    <property type="match status" value="10"/>
</dbReference>
<dbReference type="SUPFAM" id="SSF81296">
    <property type="entry name" value="E set domains"/>
    <property type="match status" value="4"/>
</dbReference>
<dbReference type="PROSITE" id="PS51172">
    <property type="entry name" value="CBM3"/>
    <property type="match status" value="1"/>
</dbReference>
<protein>
    <recommendedName>
        <fullName>Cellulose-binding protein A</fullName>
    </recommendedName>
</protein>
<sequence>MQKKKSLNLLLALMMVFALVLPSIPALAATSSMSVEFYNSNKSAQTNSITPIIKITNTSDSDLNLNDVKVRYYYTSDGTQGQTFWCDHAGALLGNSYVDNTSKVTANFVKETASPTSTYDTYVEFGFASGRATLKKGQFITIQGRITKSDWSNYTQTNDYSFDASSSTPVVNPKVTGYIGGAKVLGTAPGPDVPSSIINPTSATFDKNVTKQADVKTTMTLNGNTFKTITDANGTALNASTDYSVSGNDVTISKAYLAKQSVGTTTLNFNFSAGNPQKLVITVVDTPVEAVTATIGKVQVNAGETVAVPVNLTKVPAAGLATIELPLTFDSASLEVVSITAGDIVLNPSVNFSSTVSGSTIKLLFLDDTLGSQLITKDGVFATITFKAKAITGTTAKVTSVKLAGTPVVGDAQLQEKPCAVNPGTVTINPIDNRMQISVGTATVKAGEIAAVPVTLTSVPSTGIATAEAQVSFDATLLEVASVTAGDIVLNPTVNFSYTVNGNVIKLLFLDDTLGSQLISKDGVFVTINFKAKAVTSTVTTPVTVSGTPVFADGTLAEVQSKTAAGSVTINIGDPILEPTISPVTATFDKKAPADVATTMTLNGYTFNGITGLTTSDYSISGNVVKISQAYLAKQPVGDLTLTFNFSNGNKTATAKLVVSIKDAPKTVTATVGTATVNAGETVAVPVTLSNVSGISTAELQLSFDATLLEVVSITAGDIVLNPSVNFSSVVNGSTIKLLFLDDTLGSQLISKDGVFATINFKAKSVTSTVTTPVKVSGTPVFADGTLAELSYETVAGSVTINAIGPVKTVTATVGTATVKSGETVAVPVTLSNVPGIATAELQLSFDATLLEVASITVGDIVLNPSVNFSSVVNGSTIKLLFLDDTLGSQLISKDGVLATINFKAKTVTSTVTTPVAVSGTPVFADGTLAELQSKTVAGSVTIEPSQPVKTVTATVGTATVKSGETVAVPVTLSNVPGIATAELQVGFDATLLEVASITVGDIVLNPSVNFSSVVNGSTIKLLFLDDTLGSQLISKDGVLATINFKAKTVTSKVTTPVAVSGTPVFADGTLAELNMKTVAGSVTIEPSQPVKTVTATVGTATVKSGETVAVPVTLSNVPGIATAELQVGFDATLLEVASITVGDIVLNPSVNFSSVVNGSTIKLLFLDDTLGSQLISKDGVLATINFKAKTVTSKVTTPVAVSGTPVFADGTLAELKYETVAGSVTIEPSQPVKTVTATVGTATGKVGETVAVPVTLSNVPGIATAEVQVGFDATLLEVASITAGDIVLNPSVNFSSVVNGSTIKILFLDDTLGSQLISKDGVFATINFKIKAVPSTGTTPVAISGTPVFADGTLAEVQYKTVAGSVTIAAADIKAVKATVGTATGKAGDTVAVPVTLSNVSGIATVELQLSFDATLLEVASITAGDIVLNPSVNFSSVVNGSTIKILFLDDTLGSQLISKDGVFATVNFKVKSTATNSAVTPVTVSGTPVFADGTLAELKSESAAGRLTILPTVIIVDSTVAPTAVTFDKANQADAAITMTLNGNTFSAIKNGTATLVKGTDYTVSENVVTISKAYLAKQTGTVTLEFVFDKGNSAKVVVAVKEIQIVNSTITPVVATFEKTAAKQADVVVTMSLNGNTFSAIKNGTTTLVKGTDYTISGSTVTISKAYLATLADGSATLEFVFNQGASAKLRLTIVPAVVDPVVTDFAVKIDKVSAAAGSTVKVPVSLINVSKVGNVCVAEYKISFDSSVLTYVGTTAGTSIKNPAVNFSSQLNGNTITLLFFDNTIGNELITADGQFATIEFKVNAAATSGTTAEVKVATISSFADASLTEITKVATVNGSVKVS</sequence>